<organism>
    <name type="scientific">Chthonomonas calidirosea (strain DSM 23976 / ICMP 18418 / T49)</name>
    <dbReference type="NCBI Taxonomy" id="1303518"/>
    <lineage>
        <taxon>Bacteria</taxon>
        <taxon>Bacillati</taxon>
        <taxon>Armatimonadota</taxon>
        <taxon>Chthonomonadia</taxon>
        <taxon>Chthonomonadales</taxon>
        <taxon>Chthonomonadaceae</taxon>
        <taxon>Chthonomonas</taxon>
    </lineage>
</organism>
<reference key="1">
    <citation type="submission" date="2013-03" db="EMBL/GenBank/DDBJ databases">
        <title>Genome sequence of Chthonomonas calidirosea, the first sequenced genome from the Armatimonadetes phylum (formally candidate division OP10).</title>
        <authorList>
            <person name="Lee K.C.Y."/>
            <person name="Morgan X.C."/>
            <person name="Dunfield P.F."/>
            <person name="Tamas I."/>
            <person name="Houghton K.M."/>
            <person name="Vyssotski M."/>
            <person name="Ryan J.L.J."/>
            <person name="Lagutin K."/>
            <person name="McDonald I.R."/>
            <person name="Stott M.B."/>
        </authorList>
    </citation>
    <scope>NUCLEOTIDE SEQUENCE [LARGE SCALE GENOMIC DNA]</scope>
    <source>
        <strain>DSM 23976 / ICMP 18418 / T49</strain>
    </source>
</reference>
<reference key="2">
    <citation type="journal article" date="2017" name="Biochem. Biophys. Res. Commun.">
        <title>Identification of UBact, a ubiquitin-like protein, along with other homologous components of a conjugation system and the proteasome in different gram-negative bacteria.</title>
        <authorList>
            <person name="Lehmann G."/>
            <person name="Udasin R.G."/>
            <person name="Livneh I."/>
            <person name="Ciechanover A."/>
        </authorList>
    </citation>
    <scope>PREDICTED FUNCTION</scope>
    <source>
        <strain>DSM 23976 / ICMP 18418 / T49</strain>
    </source>
</reference>
<evidence type="ECO:0000255" key="1">
    <source>
        <dbReference type="HAMAP-Rule" id="MF_02133"/>
    </source>
</evidence>
<evidence type="ECO:0000256" key="2">
    <source>
        <dbReference type="SAM" id="MobiDB-lite"/>
    </source>
</evidence>
<evidence type="ECO:0000303" key="3">
    <source>
    </source>
</evidence>
<evidence type="ECO:0000305" key="4"/>
<evidence type="ECO:0000305" key="5">
    <source>
    </source>
</evidence>
<evidence type="ECO:0000312" key="6">
    <source>
        <dbReference type="EMBL" id="CCW36021.1"/>
    </source>
</evidence>
<protein>
    <recommendedName>
        <fullName evidence="3">Prokaryotic ubiquitin-like protein UBact</fullName>
    </recommendedName>
</protein>
<comment type="function">
    <text evidence="5">May function as a protein modifier covalently attached to lysine residues of substrate proteins. This may serve to target the modified proteins for degradation by proteasomes.</text>
</comment>
<comment type="similarity">
    <text evidence="1">Belongs to the ubiquitin-like protein UBact family.</text>
</comment>
<gene>
    <name evidence="3" type="primary">ubact</name>
    <name evidence="6" type="ORF">CCALI_02214</name>
</gene>
<name>UBACT_CHTCT</name>
<feature type="chain" id="PRO_0000441765" description="Prokaryotic ubiquitin-like protein UBact">
    <location>
        <begin position="1"/>
        <end position="64"/>
    </location>
</feature>
<feature type="region of interest" description="Disordered" evidence="2">
    <location>
        <begin position="1"/>
        <end position="64"/>
    </location>
</feature>
<feature type="compositionally biased region" description="Basic and acidic residues" evidence="2">
    <location>
        <begin position="1"/>
        <end position="12"/>
    </location>
</feature>
<feature type="compositionally biased region" description="Basic and acidic residues" evidence="2">
    <location>
        <begin position="33"/>
        <end position="64"/>
    </location>
</feature>
<feature type="cross-link" description="Isoglutamyl lysine isopeptide (Glu-Lys) (interchain with K-? in acceptor proteins)" evidence="4">
    <location>
        <position position="64"/>
    </location>
</feature>
<dbReference type="EMBL" id="HF951689">
    <property type="protein sequence ID" value="CCW36021.1"/>
    <property type="molecule type" value="Genomic_DNA"/>
</dbReference>
<dbReference type="RefSeq" id="WP_016483542.1">
    <property type="nucleotide sequence ID" value="NC_021487.1"/>
</dbReference>
<dbReference type="SMR" id="S0EX56"/>
<dbReference type="STRING" id="454171.CP488_01879"/>
<dbReference type="KEGG" id="ccz:CCALI_02214"/>
<dbReference type="PATRIC" id="fig|1303518.3.peg.2301"/>
<dbReference type="eggNOG" id="ENOG5033IZH">
    <property type="taxonomic scope" value="Bacteria"/>
</dbReference>
<dbReference type="HOGENOM" id="CLU_207029_0_0_0"/>
<dbReference type="InParanoid" id="S0EX56"/>
<dbReference type="Proteomes" id="UP000014227">
    <property type="component" value="Chromosome"/>
</dbReference>
<dbReference type="GO" id="GO:0031386">
    <property type="term" value="F:protein tag activity"/>
    <property type="evidence" value="ECO:0007669"/>
    <property type="project" value="UniProtKB-UniRule"/>
</dbReference>
<dbReference type="HAMAP" id="MF_02133">
    <property type="entry name" value="UBact"/>
    <property type="match status" value="1"/>
</dbReference>
<dbReference type="InterPro" id="IPR037543">
    <property type="entry name" value="UBact"/>
</dbReference>
<dbReference type="NCBIfam" id="NF033388">
    <property type="entry name" value="ubiq_like_UBact"/>
    <property type="match status" value="1"/>
</dbReference>
<dbReference type="Pfam" id="PF20513">
    <property type="entry name" value="UBact"/>
    <property type="match status" value="1"/>
</dbReference>
<sequence length="64" mass="7481">MSDLFRMEERRQMPILPTEPARKEGDGGGPQKPDVKRPDTSDLLRRMKRVDPDAARRYRQRSGE</sequence>
<accession>S0EX56</accession>
<keyword id="KW-1017">Isopeptide bond</keyword>
<keyword id="KW-1185">Reference proteome</keyword>
<keyword id="KW-0833">Ubl conjugation pathway</keyword>
<proteinExistence type="inferred from homology"/>